<feature type="chain" id="PRO_0000219285" description="Uroplakin-1a">
    <location>
        <begin position="1"/>
        <end position="258"/>
    </location>
</feature>
<feature type="topological domain" description="Cytoplasmic" evidence="1">
    <location>
        <begin position="1"/>
        <end position="14"/>
    </location>
</feature>
<feature type="transmembrane region" description="Helical" evidence="1">
    <location>
        <begin position="15"/>
        <end position="35"/>
    </location>
</feature>
<feature type="topological domain" description="Extracellular" evidence="1">
    <location>
        <begin position="36"/>
        <end position="59"/>
    </location>
</feature>
<feature type="transmembrane region" description="Helical" evidence="1">
    <location>
        <begin position="60"/>
        <end position="86"/>
    </location>
</feature>
<feature type="topological domain" description="Cytoplasmic" evidence="1">
    <location>
        <begin position="87"/>
        <end position="91"/>
    </location>
</feature>
<feature type="transmembrane region" description="Helical" evidence="1">
    <location>
        <begin position="92"/>
        <end position="112"/>
    </location>
</feature>
<feature type="topological domain" description="Extracellular" evidence="1">
    <location>
        <begin position="113"/>
        <end position="230"/>
    </location>
</feature>
<feature type="transmembrane region" description="Helical" evidence="1">
    <location>
        <begin position="231"/>
        <end position="252"/>
    </location>
</feature>
<feature type="topological domain" description="Cytoplasmic" evidence="1">
    <location>
        <begin position="253"/>
        <end position="258"/>
    </location>
</feature>
<feature type="glycosylation site" description="N-linked (GlcNAc...) asparagine" evidence="1">
    <location>
        <position position="170"/>
    </location>
</feature>
<reference key="1">
    <citation type="journal article" date="1994" name="J. Cell Biol.">
        <title>Uroplakins Ia and Ib, two major differentiation products of bladder epithelium, belong to a family of four transmembrane domain (4TM) proteins.</title>
        <authorList>
            <person name="Yu J."/>
            <person name="Lin J.-H."/>
            <person name="Wu X.-R."/>
            <person name="Sun T.-T."/>
        </authorList>
    </citation>
    <scope>NUCLEOTIDE SEQUENCE [MRNA]</scope>
    <scope>PARTIAL PROTEIN SEQUENCE</scope>
    <source>
        <tissue>Urinary bladder urothelium</tissue>
    </source>
</reference>
<reference key="2">
    <citation type="journal article" date="2002" name="Mol. Biol. Cell">
        <title>Specific heterodimer formation is a prerequisite for uroplakins to exit from the endoplasmic reticulum.</title>
        <authorList>
            <person name="Tu L."/>
            <person name="Sun T.-T."/>
            <person name="Kreibich G."/>
        </authorList>
    </citation>
    <scope>INTERACTION WITH UPK2</scope>
</reference>
<organism>
    <name type="scientific">Bos taurus</name>
    <name type="common">Bovine</name>
    <dbReference type="NCBI Taxonomy" id="9913"/>
    <lineage>
        <taxon>Eukaryota</taxon>
        <taxon>Metazoa</taxon>
        <taxon>Chordata</taxon>
        <taxon>Craniata</taxon>
        <taxon>Vertebrata</taxon>
        <taxon>Euteleostomi</taxon>
        <taxon>Mammalia</taxon>
        <taxon>Eutheria</taxon>
        <taxon>Laurasiatheria</taxon>
        <taxon>Artiodactyla</taxon>
        <taxon>Ruminantia</taxon>
        <taxon>Pecora</taxon>
        <taxon>Bovidae</taxon>
        <taxon>Bovinae</taxon>
        <taxon>Bos</taxon>
    </lineage>
</organism>
<keyword id="KW-0903">Direct protein sequencing</keyword>
<keyword id="KW-1015">Disulfide bond</keyword>
<keyword id="KW-0325">Glycoprotein</keyword>
<keyword id="KW-0472">Membrane</keyword>
<keyword id="KW-1185">Reference proteome</keyword>
<keyword id="KW-0812">Transmembrane</keyword>
<keyword id="KW-1133">Transmembrane helix</keyword>
<dbReference type="EMBL" id="Z29475">
    <property type="protein sequence ID" value="CAA82613.1"/>
    <property type="molecule type" value="mRNA"/>
</dbReference>
<dbReference type="PIR" id="I46080">
    <property type="entry name" value="I46080"/>
</dbReference>
<dbReference type="RefSeq" id="NP_788784.1">
    <property type="nucleotide sequence ID" value="NM_176611.2"/>
</dbReference>
<dbReference type="SMR" id="P38572"/>
<dbReference type="FunCoup" id="P38572">
    <property type="interactions" value="10"/>
</dbReference>
<dbReference type="STRING" id="9913.ENSBTAP00000027372"/>
<dbReference type="GlyCosmos" id="P38572">
    <property type="glycosylation" value="1 site, No reported glycans"/>
</dbReference>
<dbReference type="GlyGen" id="P38572">
    <property type="glycosylation" value="1 site"/>
</dbReference>
<dbReference type="PaxDb" id="9913-ENSBTAP00000027372"/>
<dbReference type="GeneID" id="282112"/>
<dbReference type="KEGG" id="bta:282112"/>
<dbReference type="CTD" id="11045"/>
<dbReference type="eggNOG" id="KOG3882">
    <property type="taxonomic scope" value="Eukaryota"/>
</dbReference>
<dbReference type="InParanoid" id="P38572"/>
<dbReference type="OrthoDB" id="6361633at2759"/>
<dbReference type="Proteomes" id="UP000009136">
    <property type="component" value="Unplaced"/>
</dbReference>
<dbReference type="GO" id="GO:0120001">
    <property type="term" value="C:apical plasma membrane urothelial plaque"/>
    <property type="evidence" value="ECO:0000314"/>
    <property type="project" value="UniProtKB"/>
</dbReference>
<dbReference type="GO" id="GO:0005783">
    <property type="term" value="C:endoplasmic reticulum"/>
    <property type="evidence" value="ECO:0000314"/>
    <property type="project" value="UniProtKB"/>
</dbReference>
<dbReference type="GO" id="GO:0016020">
    <property type="term" value="C:membrane"/>
    <property type="evidence" value="ECO:0000314"/>
    <property type="project" value="UniProtKB"/>
</dbReference>
<dbReference type="GO" id="GO:0005886">
    <property type="term" value="C:plasma membrane"/>
    <property type="evidence" value="ECO:0000314"/>
    <property type="project" value="UniProtKB"/>
</dbReference>
<dbReference type="GO" id="GO:0032991">
    <property type="term" value="C:protein-containing complex"/>
    <property type="evidence" value="ECO:0000314"/>
    <property type="project" value="UniProtKB"/>
</dbReference>
<dbReference type="GO" id="GO:0005198">
    <property type="term" value="F:structural molecule activity"/>
    <property type="evidence" value="ECO:0000314"/>
    <property type="project" value="UniProtKB"/>
</dbReference>
<dbReference type="GO" id="GO:0030855">
    <property type="term" value="P:epithelial cell differentiation"/>
    <property type="evidence" value="ECO:0000250"/>
    <property type="project" value="UniProtKB"/>
</dbReference>
<dbReference type="CDD" id="cd03156">
    <property type="entry name" value="uroplakin_I_like_LEL"/>
    <property type="match status" value="1"/>
</dbReference>
<dbReference type="FunFam" id="1.10.1450.10:FF:000017">
    <property type="entry name" value="Tetraspanin"/>
    <property type="match status" value="1"/>
</dbReference>
<dbReference type="Gene3D" id="1.10.1450.10">
    <property type="entry name" value="Tetraspanin"/>
    <property type="match status" value="1"/>
</dbReference>
<dbReference type="InterPro" id="IPR018499">
    <property type="entry name" value="Tetraspanin/Peripherin"/>
</dbReference>
<dbReference type="InterPro" id="IPR000301">
    <property type="entry name" value="Tetraspanin_animals"/>
</dbReference>
<dbReference type="InterPro" id="IPR008952">
    <property type="entry name" value="Tetraspanin_EC2_sf"/>
</dbReference>
<dbReference type="PANTHER" id="PTHR47110">
    <property type="entry name" value="TESTIS-SPECIFIC EXPRESSED PROTEIN 55"/>
    <property type="match status" value="1"/>
</dbReference>
<dbReference type="PANTHER" id="PTHR47110:SF2">
    <property type="entry name" value="UROPLAKIN-1B"/>
    <property type="match status" value="1"/>
</dbReference>
<dbReference type="Pfam" id="PF00335">
    <property type="entry name" value="Tetraspanin"/>
    <property type="match status" value="1"/>
</dbReference>
<dbReference type="PIRSF" id="PIRSF002419">
    <property type="entry name" value="Tetraspanin"/>
    <property type="match status" value="1"/>
</dbReference>
<dbReference type="PRINTS" id="PR00259">
    <property type="entry name" value="TMFOUR"/>
</dbReference>
<dbReference type="SUPFAM" id="SSF48652">
    <property type="entry name" value="Tetraspanin"/>
    <property type="match status" value="1"/>
</dbReference>
<gene>
    <name type="primary">UPK1A</name>
</gene>
<accession>P38572</accession>
<name>UPK1A_BOVIN</name>
<protein>
    <recommendedName>
        <fullName>Uroplakin-1a</fullName>
        <shortName>UP1a</shortName>
    </recommendedName>
    <alternativeName>
        <fullName>Uroplakin Ia</fullName>
        <shortName>UPIa</shortName>
    </alternativeName>
</protein>
<proteinExistence type="evidence at protein level"/>
<evidence type="ECO:0000255" key="1"/>
<evidence type="ECO:0000269" key="2">
    <source>
    </source>
</evidence>
<evidence type="ECO:0000305" key="3"/>
<sequence length="258" mass="28902">MASAAAATTEKGSPVVVGLLVMGNIIILLSGLALFAETVWVTADQYRIYPLMGVSGKDDVFAGAWIAIFCGFSFFVVASFGVGAALCRRRSMILTYLILMLIIYIFECASCITSYTHRDYMVSNPSLITKQMLTFYSADSNQGRELTRLWDRIMIEQECCGTSGPMDWVNFTSAFRATTPEVVFPWPPLCCRRTGNFIPVNEEGCRLGHLDYLFTKGCFEHIGHAIDSYTWGISWFGFAILMWTLPVMLIAMYFYTTL</sequence>
<comment type="function">
    <text>Component of the asymmetric unit membrane (AUM); a highly specialized biomembrane elaborated by terminally differentiated urothelial cells. May play an important role in normal bladder epithelial physiology, possibly in regulating membrane permeability of superficial umbrella cells or in stabilizing the apical membrane through AUM/cytoskeletal interactions.</text>
</comment>
<comment type="subunit">
    <text evidence="2">Homodimer; disulfide-linked. Interacts with uroplakin-2 (UPK2).</text>
</comment>
<comment type="subcellular location">
    <subcellularLocation>
        <location>Membrane</location>
        <topology>Multi-pass membrane protein</topology>
    </subcellularLocation>
</comment>
<comment type="tissue specificity">
    <text>Bladder epithelium.</text>
</comment>
<comment type="PTM">
    <text evidence="3">The N-terminus is blocked.</text>
</comment>
<comment type="PTM">
    <text>N-glycosylated with high-mannose oligosaccharides.</text>
</comment>
<comment type="similarity">
    <text evidence="3">Belongs to the tetraspanin (TM4SF) family.</text>
</comment>